<evidence type="ECO:0000269" key="1">
    <source>
    </source>
</evidence>
<evidence type="ECO:0000303" key="2">
    <source>
    </source>
</evidence>
<evidence type="ECO:0000305" key="3"/>
<evidence type="ECO:0000312" key="4">
    <source>
        <dbReference type="FlyBase" id="FBgn0034894"/>
    </source>
</evidence>
<feature type="chain" id="PRO_0000285780" description="Protein salivary glands marred">
    <location>
        <begin position="1"/>
        <end position="188"/>
    </location>
</feature>
<feature type="splice variant" id="VSP_024915" description="In isoform 2." evidence="3">
    <original>M</original>
    <variation>MSVAGLRQCLLLWSVDYWNLEVM</variation>
    <location>
        <position position="1"/>
    </location>
</feature>
<reference key="1">
    <citation type="journal article" date="2000" name="Science">
        <title>The genome sequence of Drosophila melanogaster.</title>
        <authorList>
            <person name="Adams M.D."/>
            <person name="Celniker S.E."/>
            <person name="Holt R.A."/>
            <person name="Evans C.A."/>
            <person name="Gocayne J.D."/>
            <person name="Amanatides P.G."/>
            <person name="Scherer S.E."/>
            <person name="Li P.W."/>
            <person name="Hoskins R.A."/>
            <person name="Galle R.F."/>
            <person name="George R.A."/>
            <person name="Lewis S.E."/>
            <person name="Richards S."/>
            <person name="Ashburner M."/>
            <person name="Henderson S.N."/>
            <person name="Sutton G.G."/>
            <person name="Wortman J.R."/>
            <person name="Yandell M.D."/>
            <person name="Zhang Q."/>
            <person name="Chen L.X."/>
            <person name="Brandon R.C."/>
            <person name="Rogers Y.-H.C."/>
            <person name="Blazej R.G."/>
            <person name="Champe M."/>
            <person name="Pfeiffer B.D."/>
            <person name="Wan K.H."/>
            <person name="Doyle C."/>
            <person name="Baxter E.G."/>
            <person name="Helt G."/>
            <person name="Nelson C.R."/>
            <person name="Miklos G.L.G."/>
            <person name="Abril J.F."/>
            <person name="Agbayani A."/>
            <person name="An H.-J."/>
            <person name="Andrews-Pfannkoch C."/>
            <person name="Baldwin D."/>
            <person name="Ballew R.M."/>
            <person name="Basu A."/>
            <person name="Baxendale J."/>
            <person name="Bayraktaroglu L."/>
            <person name="Beasley E.M."/>
            <person name="Beeson K.Y."/>
            <person name="Benos P.V."/>
            <person name="Berman B.P."/>
            <person name="Bhandari D."/>
            <person name="Bolshakov S."/>
            <person name="Borkova D."/>
            <person name="Botchan M.R."/>
            <person name="Bouck J."/>
            <person name="Brokstein P."/>
            <person name="Brottier P."/>
            <person name="Burtis K.C."/>
            <person name="Busam D.A."/>
            <person name="Butler H."/>
            <person name="Cadieu E."/>
            <person name="Center A."/>
            <person name="Chandra I."/>
            <person name="Cherry J.M."/>
            <person name="Cawley S."/>
            <person name="Dahlke C."/>
            <person name="Davenport L.B."/>
            <person name="Davies P."/>
            <person name="de Pablos B."/>
            <person name="Delcher A."/>
            <person name="Deng Z."/>
            <person name="Mays A.D."/>
            <person name="Dew I."/>
            <person name="Dietz S.M."/>
            <person name="Dodson K."/>
            <person name="Doup L.E."/>
            <person name="Downes M."/>
            <person name="Dugan-Rocha S."/>
            <person name="Dunkov B.C."/>
            <person name="Dunn P."/>
            <person name="Durbin K.J."/>
            <person name="Evangelista C.C."/>
            <person name="Ferraz C."/>
            <person name="Ferriera S."/>
            <person name="Fleischmann W."/>
            <person name="Fosler C."/>
            <person name="Gabrielian A.E."/>
            <person name="Garg N.S."/>
            <person name="Gelbart W.M."/>
            <person name="Glasser K."/>
            <person name="Glodek A."/>
            <person name="Gong F."/>
            <person name="Gorrell J.H."/>
            <person name="Gu Z."/>
            <person name="Guan P."/>
            <person name="Harris M."/>
            <person name="Harris N.L."/>
            <person name="Harvey D.A."/>
            <person name="Heiman T.J."/>
            <person name="Hernandez J.R."/>
            <person name="Houck J."/>
            <person name="Hostin D."/>
            <person name="Houston K.A."/>
            <person name="Howland T.J."/>
            <person name="Wei M.-H."/>
            <person name="Ibegwam C."/>
            <person name="Jalali M."/>
            <person name="Kalush F."/>
            <person name="Karpen G.H."/>
            <person name="Ke Z."/>
            <person name="Kennison J.A."/>
            <person name="Ketchum K.A."/>
            <person name="Kimmel B.E."/>
            <person name="Kodira C.D."/>
            <person name="Kraft C.L."/>
            <person name="Kravitz S."/>
            <person name="Kulp D."/>
            <person name="Lai Z."/>
            <person name="Lasko P."/>
            <person name="Lei Y."/>
            <person name="Levitsky A.A."/>
            <person name="Li J.H."/>
            <person name="Li Z."/>
            <person name="Liang Y."/>
            <person name="Lin X."/>
            <person name="Liu X."/>
            <person name="Mattei B."/>
            <person name="McIntosh T.C."/>
            <person name="McLeod M.P."/>
            <person name="McPherson D."/>
            <person name="Merkulov G."/>
            <person name="Milshina N.V."/>
            <person name="Mobarry C."/>
            <person name="Morris J."/>
            <person name="Moshrefi A."/>
            <person name="Mount S.M."/>
            <person name="Moy M."/>
            <person name="Murphy B."/>
            <person name="Murphy L."/>
            <person name="Muzny D.M."/>
            <person name="Nelson D.L."/>
            <person name="Nelson D.R."/>
            <person name="Nelson K.A."/>
            <person name="Nixon K."/>
            <person name="Nusskern D.R."/>
            <person name="Pacleb J.M."/>
            <person name="Palazzolo M."/>
            <person name="Pittman G.S."/>
            <person name="Pan S."/>
            <person name="Pollard J."/>
            <person name="Puri V."/>
            <person name="Reese M.G."/>
            <person name="Reinert K."/>
            <person name="Remington K."/>
            <person name="Saunders R.D.C."/>
            <person name="Scheeler F."/>
            <person name="Shen H."/>
            <person name="Shue B.C."/>
            <person name="Siden-Kiamos I."/>
            <person name="Simpson M."/>
            <person name="Skupski M.P."/>
            <person name="Smith T.J."/>
            <person name="Spier E."/>
            <person name="Spradling A.C."/>
            <person name="Stapleton M."/>
            <person name="Strong R."/>
            <person name="Sun E."/>
            <person name="Svirskas R."/>
            <person name="Tector C."/>
            <person name="Turner R."/>
            <person name="Venter E."/>
            <person name="Wang A.H."/>
            <person name="Wang X."/>
            <person name="Wang Z.-Y."/>
            <person name="Wassarman D.A."/>
            <person name="Weinstock G.M."/>
            <person name="Weissenbach J."/>
            <person name="Williams S.M."/>
            <person name="Woodage T."/>
            <person name="Worley K.C."/>
            <person name="Wu D."/>
            <person name="Yang S."/>
            <person name="Yao Q.A."/>
            <person name="Ye J."/>
            <person name="Yeh R.-F."/>
            <person name="Zaveri J.S."/>
            <person name="Zhan M."/>
            <person name="Zhang G."/>
            <person name="Zhao Q."/>
            <person name="Zheng L."/>
            <person name="Zheng X.H."/>
            <person name="Zhong F.N."/>
            <person name="Zhong W."/>
            <person name="Zhou X."/>
            <person name="Zhu S.C."/>
            <person name="Zhu X."/>
            <person name="Smith H.O."/>
            <person name="Gibbs R.A."/>
            <person name="Myers E.W."/>
            <person name="Rubin G.M."/>
            <person name="Venter J.C."/>
        </authorList>
    </citation>
    <scope>NUCLEOTIDE SEQUENCE [LARGE SCALE GENOMIC DNA]</scope>
    <source>
        <strain>Berkeley</strain>
    </source>
</reference>
<reference key="2">
    <citation type="journal article" date="2002" name="Genome Biol.">
        <title>Annotation of the Drosophila melanogaster euchromatic genome: a systematic review.</title>
        <authorList>
            <person name="Misra S."/>
            <person name="Crosby M.A."/>
            <person name="Mungall C.J."/>
            <person name="Matthews B.B."/>
            <person name="Campbell K.S."/>
            <person name="Hradecky P."/>
            <person name="Huang Y."/>
            <person name="Kaminker J.S."/>
            <person name="Millburn G.H."/>
            <person name="Prochnik S.E."/>
            <person name="Smith C.D."/>
            <person name="Tupy J.L."/>
            <person name="Whitfield E.J."/>
            <person name="Bayraktaroglu L."/>
            <person name="Berman B.P."/>
            <person name="Bettencourt B.R."/>
            <person name="Celniker S.E."/>
            <person name="de Grey A.D.N.J."/>
            <person name="Drysdale R.A."/>
            <person name="Harris N.L."/>
            <person name="Richter J."/>
            <person name="Russo S."/>
            <person name="Schroeder A.J."/>
            <person name="Shu S.Q."/>
            <person name="Stapleton M."/>
            <person name="Yamada C."/>
            <person name="Ashburner M."/>
            <person name="Gelbart W.M."/>
            <person name="Rubin G.M."/>
            <person name="Lewis S.E."/>
        </authorList>
    </citation>
    <scope>GENOME REANNOTATION</scope>
    <scope>ALTERNATIVE SPLICING</scope>
    <source>
        <strain>Berkeley</strain>
    </source>
</reference>
<reference key="3">
    <citation type="journal article" date="2002" name="Genome Biol.">
        <title>A Drosophila full-length cDNA resource.</title>
        <authorList>
            <person name="Stapleton M."/>
            <person name="Carlson J.W."/>
            <person name="Brokstein P."/>
            <person name="Yu C."/>
            <person name="Champe M."/>
            <person name="George R.A."/>
            <person name="Guarin H."/>
            <person name="Kronmiller B."/>
            <person name="Pacleb J.M."/>
            <person name="Park S."/>
            <person name="Wan K.H."/>
            <person name="Rubin G.M."/>
            <person name="Celniker S.E."/>
        </authorList>
    </citation>
    <scope>NUCLEOTIDE SEQUENCE [LARGE SCALE MRNA] (ISOFORM 1)</scope>
    <source>
        <strain>Berkeley</strain>
        <tissue>Embryo</tissue>
    </source>
</reference>
<reference key="4">
    <citation type="journal article" date="2015" name="Biol. Open">
        <title>The Drosophila TIPE family member Sigmar interacts with the Ste20-like kinase Misshapen and modulates JNK signaling, cytoskeletal remodeling and autophagy.</title>
        <authorList>
            <person name="Chittaranjan S."/>
            <person name="Xu J."/>
            <person name="Kuzyk M."/>
            <person name="Dullat H.K."/>
            <person name="Wilton J."/>
            <person name="DeVorkin L."/>
            <person name="Lebovitz C."/>
            <person name="Morin G.B."/>
            <person name="Marra M.A."/>
            <person name="Gorski S.M."/>
        </authorList>
    </citation>
    <scope>FUNCTION</scope>
    <scope>INTERACTION WITH MSN</scope>
    <scope>SUBCELLULAR LOCATION</scope>
    <scope>DEVELOPMENTAL STAGE</scope>
    <scope>DISRUPTION PHENOTYPE</scope>
</reference>
<proteinExistence type="evidence at protein level"/>
<gene>
    <name evidence="2 4" type="primary">sigmar</name>
    <name evidence="4" type="ORF">CG4091</name>
</gene>
<name>TFP8L_DROME</name>
<comment type="function">
    <text evidence="1">Important for modulating JNK signaling, cytoskeletal remodeling and autophagy in larval salivary glands (PubMed:25836674). During salivary gland development, involved in the positive regulation of the JNK signaling pathway, acting downstream of the TNF ligand egr and upstream of bsk (PubMed:25836674).</text>
</comment>
<comment type="subunit">
    <text evidence="1">Interacts with the Ste20-like MAP kinase msn.</text>
</comment>
<comment type="subcellular location">
    <subcellularLocation>
        <location evidence="1">Cytoplasm</location>
    </subcellularLocation>
    <subcellularLocation>
        <location evidence="1">Cytoplasm</location>
        <location evidence="1">Cytoskeleton</location>
    </subcellularLocation>
    <text evidence="1">Localizes to actin containing cellular projections and microtubules.</text>
</comment>
<comment type="alternative products">
    <event type="alternative splicing"/>
    <isoform>
        <id>Q7KVH9-1</id>
        <name>1</name>
        <name>A</name>
        <name>B</name>
        <sequence type="displayed"/>
    </isoform>
    <isoform>
        <id>Q7KVH9-2</id>
        <name>2</name>
        <name>C</name>
        <sequence type="described" ref="VSP_024915"/>
    </isoform>
</comment>
<comment type="developmental stage">
    <text evidence="1">In larval salivary glands, not detected until 23 hours after puparium formation (APF), prior to the onset of salivary gland histolysis (at protein level) (PubMed:25836674). In larval salivary glands, not detected until 20 hours APF, then expression levels dramatically increase 23 hours APF (PubMed:25836674). Expressed in the larval midgut, at the 3rd instar wandering stage, with expression levels increasing at 0 hr APF after the ecdysone pulse (PubMed:25836674). At 3 and 5 hours APF, expression levels in the midgut reduce slightly but remain elevated compared to expression levels in 3rd instar wandering larvae (PubMed:25836674). In embryos, expressed in the embryonic brain and midgut (PubMed:25836674).</text>
</comment>
<comment type="disruption phenotype">
    <text evidence="1">Viable and develops to adulthood (PubMed:25836674). However, pupal salivary glands are abnormal with large empty vacuole-like structures, tubulin disorganization, and reduced autophagy flux (PubMed:25836674). Salivary glands appear normal up to the wandering larval stage, but then exhibit a slight increase in overall length until in pupae 23 hours after puparium formation, salivary glands are significantly longer and wider (PubMed:25836674). Salivary gland histolysis occurs but appears to be delayed (PubMed:25836674). In salivary glands, bsk activation and thus JNK signaling appears to be disrupted as nuclear localization of bsk is absent in large areas of the salivary gland tissues (PubMed:25836674).</text>
</comment>
<comment type="miscellaneous">
    <text evidence="2">The name 'sigmar' is an abbreviation for salivary glands marred which describes the mutant phenotype.</text>
</comment>
<comment type="similarity">
    <text evidence="3">Belongs to the TNFAIP8 family.</text>
</comment>
<protein>
    <recommendedName>
        <fullName evidence="2">Protein salivary glands marred</fullName>
    </recommendedName>
    <alternativeName>
        <fullName evidence="3">Tumor necrosis factor alpha-induced protein 8-like protein</fullName>
        <shortName evidence="3">TNF alpha-induced protein 8-like protein</shortName>
    </alternativeName>
</protein>
<dbReference type="EMBL" id="AE013599">
    <property type="protein sequence ID" value="AAF47048.1"/>
    <property type="molecule type" value="Genomic_DNA"/>
</dbReference>
<dbReference type="EMBL" id="AE013599">
    <property type="protein sequence ID" value="AAM68269.2"/>
    <property type="molecule type" value="Genomic_DNA"/>
</dbReference>
<dbReference type="EMBL" id="AY095033">
    <property type="protein sequence ID" value="AAM11361.1"/>
    <property type="molecule type" value="mRNA"/>
</dbReference>
<dbReference type="RefSeq" id="NP_611820.1">
    <molecule id="Q7KVH9-1"/>
    <property type="nucleotide sequence ID" value="NM_137976.3"/>
</dbReference>
<dbReference type="RefSeq" id="NP_726357.1">
    <molecule id="Q7KVH9-1"/>
    <property type="nucleotide sequence ID" value="NM_166621.2"/>
</dbReference>
<dbReference type="RefSeq" id="NP_726358.2">
    <molecule id="Q7KVH9-2"/>
    <property type="nucleotide sequence ID" value="NM_166622.2"/>
</dbReference>
<dbReference type="SMR" id="Q7KVH9"/>
<dbReference type="BioGRID" id="63349">
    <property type="interactions" value="3"/>
</dbReference>
<dbReference type="FunCoup" id="Q7KVH9">
    <property type="interactions" value="223"/>
</dbReference>
<dbReference type="IntAct" id="Q7KVH9">
    <property type="interactions" value="2"/>
</dbReference>
<dbReference type="STRING" id="7227.FBpp0072006"/>
<dbReference type="PaxDb" id="7227-FBpp0072006"/>
<dbReference type="DNASU" id="37751"/>
<dbReference type="EnsemblMetazoa" id="FBtr0072096">
    <molecule id="Q7KVH9-1"/>
    <property type="protein sequence ID" value="FBpp0072005"/>
    <property type="gene ID" value="FBgn0034894"/>
</dbReference>
<dbReference type="EnsemblMetazoa" id="FBtr0072097">
    <molecule id="Q7KVH9-2"/>
    <property type="protein sequence ID" value="FBpp0072006"/>
    <property type="gene ID" value="FBgn0034894"/>
</dbReference>
<dbReference type="EnsemblMetazoa" id="FBtr0072098">
    <molecule id="Q7KVH9-1"/>
    <property type="protein sequence ID" value="FBpp0072007"/>
    <property type="gene ID" value="FBgn0034894"/>
</dbReference>
<dbReference type="GeneID" id="37751"/>
<dbReference type="KEGG" id="dme:Dmel_CG4091"/>
<dbReference type="UCSC" id="CG4091-RA">
    <molecule id="Q7KVH9-1"/>
    <property type="organism name" value="d. melanogaster"/>
</dbReference>
<dbReference type="AGR" id="FB:FBgn0034894"/>
<dbReference type="CTD" id="37751"/>
<dbReference type="FlyBase" id="FBgn0034894">
    <property type="gene designation" value="sigmar"/>
</dbReference>
<dbReference type="VEuPathDB" id="VectorBase:FBgn0034894"/>
<dbReference type="eggNOG" id="ENOG502S00N">
    <property type="taxonomic scope" value="Eukaryota"/>
</dbReference>
<dbReference type="GeneTree" id="ENSGT00390000003488"/>
<dbReference type="HOGENOM" id="CLU_085918_1_0_1"/>
<dbReference type="InParanoid" id="Q7KVH9"/>
<dbReference type="OMA" id="QDRCDQV"/>
<dbReference type="OrthoDB" id="10055976at2759"/>
<dbReference type="PhylomeDB" id="Q7KVH9"/>
<dbReference type="Reactome" id="R-DME-1483255">
    <property type="pathway name" value="PI Metabolism"/>
</dbReference>
<dbReference type="BioGRID-ORCS" id="37751">
    <property type="hits" value="0 hits in 3 CRISPR screens"/>
</dbReference>
<dbReference type="GenomeRNAi" id="37751"/>
<dbReference type="PRO" id="PR:Q7KVH9"/>
<dbReference type="Proteomes" id="UP000000803">
    <property type="component" value="Chromosome 2R"/>
</dbReference>
<dbReference type="Bgee" id="FBgn0034894">
    <property type="expression patterns" value="Expressed in embryonic/larval hemocyte (Drosophila) and 182 other cell types or tissues"/>
</dbReference>
<dbReference type="ExpressionAtlas" id="Q7KVH9">
    <property type="expression patterns" value="baseline and differential"/>
</dbReference>
<dbReference type="GO" id="GO:0042995">
    <property type="term" value="C:cell projection"/>
    <property type="evidence" value="ECO:0000314"/>
    <property type="project" value="FlyBase"/>
</dbReference>
<dbReference type="GO" id="GO:0005737">
    <property type="term" value="C:cytoplasm"/>
    <property type="evidence" value="ECO:0000314"/>
    <property type="project" value="FlyBase"/>
</dbReference>
<dbReference type="GO" id="GO:0005856">
    <property type="term" value="C:cytoskeleton"/>
    <property type="evidence" value="ECO:0007669"/>
    <property type="project" value="UniProtKB-SubCell"/>
</dbReference>
<dbReference type="GO" id="GO:0043027">
    <property type="term" value="F:cysteine-type endopeptidase inhibitor activity involved in apoptotic process"/>
    <property type="evidence" value="ECO:0000250"/>
    <property type="project" value="UniProtKB"/>
</dbReference>
<dbReference type="GO" id="GO:0043065">
    <property type="term" value="P:positive regulation of apoptotic process"/>
    <property type="evidence" value="ECO:0000250"/>
    <property type="project" value="UniProtKB"/>
</dbReference>
<dbReference type="GO" id="GO:0046330">
    <property type="term" value="P:positive regulation of JNK cascade"/>
    <property type="evidence" value="ECO:0000315"/>
    <property type="project" value="FlyBase"/>
</dbReference>
<dbReference type="GO" id="GO:0010506">
    <property type="term" value="P:regulation of autophagy"/>
    <property type="evidence" value="ECO:0000315"/>
    <property type="project" value="FlyBase"/>
</dbReference>
<dbReference type="GO" id="GO:0070507">
    <property type="term" value="P:regulation of microtubule cytoskeleton organization"/>
    <property type="evidence" value="ECO:0000315"/>
    <property type="project" value="FlyBase"/>
</dbReference>
<dbReference type="GO" id="GO:0007435">
    <property type="term" value="P:salivary gland morphogenesis"/>
    <property type="evidence" value="ECO:0000315"/>
    <property type="project" value="FlyBase"/>
</dbReference>
<dbReference type="FunFam" id="1.20.1440.160:FF:000001">
    <property type="entry name" value="Tumor necrosis factor alpha-induced protein 8-like 1"/>
    <property type="match status" value="1"/>
</dbReference>
<dbReference type="Gene3D" id="1.20.1440.160">
    <property type="entry name" value="Tumor necrosis factor alpha-induced protein 8-like"/>
    <property type="match status" value="1"/>
</dbReference>
<dbReference type="InterPro" id="IPR008477">
    <property type="entry name" value="TNFAIP8-like"/>
</dbReference>
<dbReference type="InterPro" id="IPR038355">
    <property type="entry name" value="TNFAIP8_sf"/>
</dbReference>
<dbReference type="PANTHER" id="PTHR12757:SF1">
    <property type="entry name" value="PROTEIN SALIVARY GLANDS MARRED"/>
    <property type="match status" value="1"/>
</dbReference>
<dbReference type="PANTHER" id="PTHR12757">
    <property type="entry name" value="TUMOR NECROSIS FACTOR INDUCED PROTEIN"/>
    <property type="match status" value="1"/>
</dbReference>
<dbReference type="Pfam" id="PF05527">
    <property type="entry name" value="DUF758"/>
    <property type="match status" value="1"/>
</dbReference>
<accession>Q7KVH9</accession>
<accession>Q9W1L0</accession>
<keyword id="KW-0025">Alternative splicing</keyword>
<keyword id="KW-0963">Cytoplasm</keyword>
<keyword id="KW-0206">Cytoskeleton</keyword>
<keyword id="KW-1185">Reference proteome</keyword>
<organism>
    <name type="scientific">Drosophila melanogaster</name>
    <name type="common">Fruit fly</name>
    <dbReference type="NCBI Taxonomy" id="7227"/>
    <lineage>
        <taxon>Eukaryota</taxon>
        <taxon>Metazoa</taxon>
        <taxon>Ecdysozoa</taxon>
        <taxon>Arthropoda</taxon>
        <taxon>Hexapoda</taxon>
        <taxon>Insecta</taxon>
        <taxon>Pterygota</taxon>
        <taxon>Neoptera</taxon>
        <taxon>Endopterygota</taxon>
        <taxon>Diptera</taxon>
        <taxon>Brachycera</taxon>
        <taxon>Muscomorpha</taxon>
        <taxon>Ephydroidea</taxon>
        <taxon>Drosophilidae</taxon>
        <taxon>Drosophila</taxon>
        <taxon>Sophophora</taxon>
    </lineage>
</organism>
<sequence>MADNVFKSHDIGLRAQKKILSRMATKNIAKTFIDGTTASLLDNLYRLCKMHTGNKAKAEKLIKNIIKIVIKIGVLHRNNQFSDEELQKAELFKRKFQNTQLSIISFYEVDFTFDLPYLQKSIAESQVALKSIVQPHLTEKSLGRIDEVFDFFGEEALLETAFRPDSPYREVMGKIVADINAAMETGDI</sequence>